<organism>
    <name type="scientific">Staphylococcus aureus (strain Mu50 / ATCC 700699)</name>
    <dbReference type="NCBI Taxonomy" id="158878"/>
    <lineage>
        <taxon>Bacteria</taxon>
        <taxon>Bacillati</taxon>
        <taxon>Bacillota</taxon>
        <taxon>Bacilli</taxon>
        <taxon>Bacillales</taxon>
        <taxon>Staphylococcaceae</taxon>
        <taxon>Staphylococcus</taxon>
    </lineage>
</organism>
<reference key="1">
    <citation type="journal article" date="2001" name="Lancet">
        <title>Whole genome sequencing of meticillin-resistant Staphylococcus aureus.</title>
        <authorList>
            <person name="Kuroda M."/>
            <person name="Ohta T."/>
            <person name="Uchiyama I."/>
            <person name="Baba T."/>
            <person name="Yuzawa H."/>
            <person name="Kobayashi I."/>
            <person name="Cui L."/>
            <person name="Oguchi A."/>
            <person name="Aoki K."/>
            <person name="Nagai Y."/>
            <person name="Lian J.-Q."/>
            <person name="Ito T."/>
            <person name="Kanamori M."/>
            <person name="Matsumaru H."/>
            <person name="Maruyama A."/>
            <person name="Murakami H."/>
            <person name="Hosoyama A."/>
            <person name="Mizutani-Ui Y."/>
            <person name="Takahashi N.K."/>
            <person name="Sawano T."/>
            <person name="Inoue R."/>
            <person name="Kaito C."/>
            <person name="Sekimizu K."/>
            <person name="Hirakawa H."/>
            <person name="Kuhara S."/>
            <person name="Goto S."/>
            <person name="Yabuzaki J."/>
            <person name="Kanehisa M."/>
            <person name="Yamashita A."/>
            <person name="Oshima K."/>
            <person name="Furuya K."/>
            <person name="Yoshino C."/>
            <person name="Shiba T."/>
            <person name="Hattori M."/>
            <person name="Ogasawara N."/>
            <person name="Hayashi H."/>
            <person name="Hiramatsu K."/>
        </authorList>
    </citation>
    <scope>NUCLEOTIDE SEQUENCE [LARGE SCALE GENOMIC DNA]</scope>
    <source>
        <strain>Mu50 / ATCC 700699</strain>
    </source>
</reference>
<dbReference type="EC" id="3.4.21.-"/>
<dbReference type="EMBL" id="BA000017">
    <property type="protein sequence ID" value="BAB57582.1"/>
    <property type="molecule type" value="Genomic_DNA"/>
</dbReference>
<dbReference type="RefSeq" id="WP_000342131.1">
    <property type="nucleotide sequence ID" value="NC_002758.2"/>
</dbReference>
<dbReference type="SMR" id="Q99U67"/>
<dbReference type="KEGG" id="sav:SAV1420"/>
<dbReference type="HOGENOM" id="CLU_017295_3_0_9"/>
<dbReference type="PhylomeDB" id="Q99U67"/>
<dbReference type="Proteomes" id="UP000002481">
    <property type="component" value="Chromosome"/>
</dbReference>
<dbReference type="GO" id="GO:0030288">
    <property type="term" value="C:outer membrane-bounded periplasmic space"/>
    <property type="evidence" value="ECO:0007669"/>
    <property type="project" value="TreeGrafter"/>
</dbReference>
<dbReference type="GO" id="GO:0005886">
    <property type="term" value="C:plasma membrane"/>
    <property type="evidence" value="ECO:0007669"/>
    <property type="project" value="UniProtKB-SubCell"/>
</dbReference>
<dbReference type="GO" id="GO:0004175">
    <property type="term" value="F:endopeptidase activity"/>
    <property type="evidence" value="ECO:0007669"/>
    <property type="project" value="TreeGrafter"/>
</dbReference>
<dbReference type="GO" id="GO:0008236">
    <property type="term" value="F:serine-type peptidase activity"/>
    <property type="evidence" value="ECO:0007669"/>
    <property type="project" value="UniProtKB-KW"/>
</dbReference>
<dbReference type="GO" id="GO:0006508">
    <property type="term" value="P:proteolysis"/>
    <property type="evidence" value="ECO:0007669"/>
    <property type="project" value="UniProtKB-KW"/>
</dbReference>
<dbReference type="GO" id="GO:0007165">
    <property type="term" value="P:signal transduction"/>
    <property type="evidence" value="ECO:0007669"/>
    <property type="project" value="TreeGrafter"/>
</dbReference>
<dbReference type="CDD" id="cd06782">
    <property type="entry name" value="cpPDZ_CPP-like"/>
    <property type="match status" value="1"/>
</dbReference>
<dbReference type="CDD" id="cd07560">
    <property type="entry name" value="Peptidase_S41_CPP"/>
    <property type="match status" value="1"/>
</dbReference>
<dbReference type="FunFam" id="2.30.42.10:FF:000063">
    <property type="entry name" value="Peptidase, S41 family"/>
    <property type="match status" value="1"/>
</dbReference>
<dbReference type="FunFam" id="3.30.750.44:FF:000001">
    <property type="entry name" value="S41 family peptidase"/>
    <property type="match status" value="1"/>
</dbReference>
<dbReference type="Gene3D" id="2.30.42.10">
    <property type="match status" value="1"/>
</dbReference>
<dbReference type="Gene3D" id="3.30.750.44">
    <property type="match status" value="1"/>
</dbReference>
<dbReference type="Gene3D" id="3.90.226.10">
    <property type="entry name" value="2-enoyl-CoA Hydratase, Chain A, domain 1"/>
    <property type="match status" value="1"/>
</dbReference>
<dbReference type="Gene3D" id="1.10.101.10">
    <property type="entry name" value="PGBD-like superfamily/PGBD"/>
    <property type="match status" value="1"/>
</dbReference>
<dbReference type="InterPro" id="IPR029045">
    <property type="entry name" value="ClpP/crotonase-like_dom_sf"/>
</dbReference>
<dbReference type="InterPro" id="IPR055210">
    <property type="entry name" value="CtpA/B_N"/>
</dbReference>
<dbReference type="InterPro" id="IPR001478">
    <property type="entry name" value="PDZ"/>
</dbReference>
<dbReference type="InterPro" id="IPR041489">
    <property type="entry name" value="PDZ_6"/>
</dbReference>
<dbReference type="InterPro" id="IPR036034">
    <property type="entry name" value="PDZ_sf"/>
</dbReference>
<dbReference type="InterPro" id="IPR004447">
    <property type="entry name" value="Peptidase_S41A"/>
</dbReference>
<dbReference type="InterPro" id="IPR002477">
    <property type="entry name" value="Peptidoglycan-bd-like"/>
</dbReference>
<dbReference type="InterPro" id="IPR036365">
    <property type="entry name" value="PGBD-like_sf"/>
</dbReference>
<dbReference type="InterPro" id="IPR036366">
    <property type="entry name" value="PGBDSf"/>
</dbReference>
<dbReference type="InterPro" id="IPR005151">
    <property type="entry name" value="Tail-specific_protease"/>
</dbReference>
<dbReference type="NCBIfam" id="TIGR00225">
    <property type="entry name" value="prc"/>
    <property type="match status" value="1"/>
</dbReference>
<dbReference type="PANTHER" id="PTHR32060:SF30">
    <property type="entry name" value="CARBOXY-TERMINAL PROCESSING PROTEASE CTPA"/>
    <property type="match status" value="1"/>
</dbReference>
<dbReference type="PANTHER" id="PTHR32060">
    <property type="entry name" value="TAIL-SPECIFIC PROTEASE"/>
    <property type="match status" value="1"/>
</dbReference>
<dbReference type="Pfam" id="PF22694">
    <property type="entry name" value="CtpB_N-like"/>
    <property type="match status" value="1"/>
</dbReference>
<dbReference type="Pfam" id="PF17820">
    <property type="entry name" value="PDZ_6"/>
    <property type="match status" value="1"/>
</dbReference>
<dbReference type="Pfam" id="PF03572">
    <property type="entry name" value="Peptidase_S41"/>
    <property type="match status" value="1"/>
</dbReference>
<dbReference type="Pfam" id="PF01471">
    <property type="entry name" value="PG_binding_1"/>
    <property type="match status" value="1"/>
</dbReference>
<dbReference type="SMART" id="SM00228">
    <property type="entry name" value="PDZ"/>
    <property type="match status" value="1"/>
</dbReference>
<dbReference type="SMART" id="SM00245">
    <property type="entry name" value="TSPc"/>
    <property type="match status" value="1"/>
</dbReference>
<dbReference type="SUPFAM" id="SSF52096">
    <property type="entry name" value="ClpP/crotonase"/>
    <property type="match status" value="1"/>
</dbReference>
<dbReference type="SUPFAM" id="SSF50156">
    <property type="entry name" value="PDZ domain-like"/>
    <property type="match status" value="1"/>
</dbReference>
<dbReference type="SUPFAM" id="SSF47090">
    <property type="entry name" value="PGBD-like"/>
    <property type="match status" value="1"/>
</dbReference>
<dbReference type="PROSITE" id="PS50106">
    <property type="entry name" value="PDZ"/>
    <property type="match status" value="1"/>
</dbReference>
<gene>
    <name type="ordered locus">SAV1420</name>
</gene>
<keyword id="KW-1003">Cell membrane</keyword>
<keyword id="KW-0378">Hydrolase</keyword>
<keyword id="KW-0472">Membrane</keyword>
<keyword id="KW-0645">Protease</keyword>
<keyword id="KW-0720">Serine protease</keyword>
<keyword id="KW-0812">Transmembrane</keyword>
<keyword id="KW-1133">Transmembrane helix</keyword>
<sequence>MDDKQHTSSSDDERAEIATSNQDQETNSSKRVHLKRWQFISILIGTTLITAVITVVAYIFINQKISGLNKTDQANLNKIENVYKILNSDYYKKQDSDKLSKAAIDGMVKELKDPYSEYLTKEQTKSFNEGVSGDFVGIGAEMQKKNDQIMVTSPMKGSPAERAGIRPKDVITKVNGKSIKGKALDEVVKDVRGKENTEVTLTVQRGSEEKDVKIKREKIHVKSVDYKKKGKVGVITINKFQNDTSGELKDAVLKAHKDGLKKIVLDLRNNPGGLLDEAVKMANIFIDKGKTVVKLEKGKDTEAIQTSNDSLKEAKDMDISILVNEGSASASEVFTGALKDYNKAKVYGSKTFGKGVVQTTREFKDGSLLKYTEMKWLTPDGHYIHGKGIKPDVTIDTPKYQSLNVIPNTKTFKVGDDDKNIKTIKIGLSALGYKVDNESTQFDQALENQVKAFQQANKLEVTGEFNKETNNKFTELLVEKANKHDDVLDKLINILK</sequence>
<name>CTPAL_STAAM</name>
<evidence type="ECO:0000250" key="1"/>
<evidence type="ECO:0000255" key="2"/>
<evidence type="ECO:0000255" key="3">
    <source>
        <dbReference type="PROSITE-ProRule" id="PRU00143"/>
    </source>
</evidence>
<evidence type="ECO:0000256" key="4">
    <source>
        <dbReference type="SAM" id="MobiDB-lite"/>
    </source>
</evidence>
<evidence type="ECO:0000305" key="5"/>
<protein>
    <recommendedName>
        <fullName>Probable CtpA-like serine protease</fullName>
        <ecNumber>3.4.21.-</ecNumber>
    </recommendedName>
</protein>
<accession>Q99U67</accession>
<comment type="subcellular location">
    <subcellularLocation>
        <location evidence="5">Cell membrane</location>
        <topology evidence="5">Single-pass membrane protein</topology>
    </subcellularLocation>
</comment>
<comment type="similarity">
    <text evidence="5">Belongs to the peptidase S41A family.</text>
</comment>
<proteinExistence type="inferred from homology"/>
<feature type="chain" id="PRO_0000233190" description="Probable CtpA-like serine protease">
    <location>
        <begin position="1"/>
        <end position="496"/>
    </location>
</feature>
<feature type="transmembrane region" description="Helical" evidence="2">
    <location>
        <begin position="39"/>
        <end position="59"/>
    </location>
</feature>
<feature type="domain" description="PDZ" evidence="3">
    <location>
        <begin position="124"/>
        <end position="206"/>
    </location>
</feature>
<feature type="region of interest" description="Disordered" evidence="4">
    <location>
        <begin position="1"/>
        <end position="27"/>
    </location>
</feature>
<feature type="compositionally biased region" description="Basic and acidic residues" evidence="4">
    <location>
        <begin position="1"/>
        <end position="16"/>
    </location>
</feature>
<feature type="compositionally biased region" description="Polar residues" evidence="4">
    <location>
        <begin position="18"/>
        <end position="27"/>
    </location>
</feature>
<feature type="active site" description="Charge relay system" evidence="1">
    <location>
        <position position="329"/>
    </location>
</feature>
<feature type="active site" description="Charge relay system" evidence="1">
    <location>
        <position position="340"/>
    </location>
</feature>
<feature type="active site" description="Charge relay system" evidence="1">
    <location>
        <position position="354"/>
    </location>
</feature>